<name>RL16_BACC7</name>
<accession>B7HQV1</accession>
<protein>
    <recommendedName>
        <fullName evidence="1">Large ribosomal subunit protein uL16</fullName>
    </recommendedName>
    <alternativeName>
        <fullName evidence="2">50S ribosomal protein L16</fullName>
    </alternativeName>
</protein>
<sequence>MLMPKRVKYRREHRGKMRGRAKGGTEVAFGEFGLQAQAASWITNRQIEAARRAMTRYMKRGGKVWIKIFPSKPYTAKPLEVRMGSGKGAPEGWVAVVKPGKIMFEIAGVSEEVAREALRLAAHKLPVKCKFVKREENGGESNEN</sequence>
<organism>
    <name type="scientific">Bacillus cereus (strain AH187)</name>
    <dbReference type="NCBI Taxonomy" id="405534"/>
    <lineage>
        <taxon>Bacteria</taxon>
        <taxon>Bacillati</taxon>
        <taxon>Bacillota</taxon>
        <taxon>Bacilli</taxon>
        <taxon>Bacillales</taxon>
        <taxon>Bacillaceae</taxon>
        <taxon>Bacillus</taxon>
        <taxon>Bacillus cereus group</taxon>
    </lineage>
</organism>
<keyword id="KW-0687">Ribonucleoprotein</keyword>
<keyword id="KW-0689">Ribosomal protein</keyword>
<keyword id="KW-0694">RNA-binding</keyword>
<keyword id="KW-0699">rRNA-binding</keyword>
<keyword id="KW-0820">tRNA-binding</keyword>
<comment type="function">
    <text evidence="1">Binds 23S rRNA and is also seen to make contacts with the A and possibly P site tRNAs.</text>
</comment>
<comment type="subunit">
    <text evidence="1">Part of the 50S ribosomal subunit.</text>
</comment>
<comment type="similarity">
    <text evidence="1">Belongs to the universal ribosomal protein uL16 family.</text>
</comment>
<gene>
    <name evidence="1" type="primary">rplP</name>
    <name type="ordered locus">BCAH187_A0148</name>
</gene>
<reference key="1">
    <citation type="submission" date="2008-10" db="EMBL/GenBank/DDBJ databases">
        <title>Genome sequence of Bacillus cereus AH187.</title>
        <authorList>
            <person name="Dodson R.J."/>
            <person name="Durkin A.S."/>
            <person name="Rosovitz M.J."/>
            <person name="Rasko D.A."/>
            <person name="Kolsto A.B."/>
            <person name="Okstad O.A."/>
            <person name="Ravel J."/>
            <person name="Sutton G."/>
        </authorList>
    </citation>
    <scope>NUCLEOTIDE SEQUENCE [LARGE SCALE GENOMIC DNA]</scope>
    <source>
        <strain>AH187</strain>
    </source>
</reference>
<dbReference type="EMBL" id="CP001177">
    <property type="protein sequence ID" value="ACJ82231.1"/>
    <property type="molecule type" value="Genomic_DNA"/>
</dbReference>
<dbReference type="SMR" id="B7HQV1"/>
<dbReference type="KEGG" id="bcr:BCAH187_A0148"/>
<dbReference type="HOGENOM" id="CLU_078858_2_1_9"/>
<dbReference type="Proteomes" id="UP000002214">
    <property type="component" value="Chromosome"/>
</dbReference>
<dbReference type="GO" id="GO:0022625">
    <property type="term" value="C:cytosolic large ribosomal subunit"/>
    <property type="evidence" value="ECO:0007669"/>
    <property type="project" value="TreeGrafter"/>
</dbReference>
<dbReference type="GO" id="GO:0019843">
    <property type="term" value="F:rRNA binding"/>
    <property type="evidence" value="ECO:0007669"/>
    <property type="project" value="UniProtKB-UniRule"/>
</dbReference>
<dbReference type="GO" id="GO:0003735">
    <property type="term" value="F:structural constituent of ribosome"/>
    <property type="evidence" value="ECO:0007669"/>
    <property type="project" value="InterPro"/>
</dbReference>
<dbReference type="GO" id="GO:0000049">
    <property type="term" value="F:tRNA binding"/>
    <property type="evidence" value="ECO:0007669"/>
    <property type="project" value="UniProtKB-KW"/>
</dbReference>
<dbReference type="GO" id="GO:0006412">
    <property type="term" value="P:translation"/>
    <property type="evidence" value="ECO:0007669"/>
    <property type="project" value="UniProtKB-UniRule"/>
</dbReference>
<dbReference type="CDD" id="cd01433">
    <property type="entry name" value="Ribosomal_L16_L10e"/>
    <property type="match status" value="1"/>
</dbReference>
<dbReference type="FunFam" id="3.90.1170.10:FF:000001">
    <property type="entry name" value="50S ribosomal protein L16"/>
    <property type="match status" value="1"/>
</dbReference>
<dbReference type="Gene3D" id="3.90.1170.10">
    <property type="entry name" value="Ribosomal protein L10e/L16"/>
    <property type="match status" value="1"/>
</dbReference>
<dbReference type="HAMAP" id="MF_01342">
    <property type="entry name" value="Ribosomal_uL16"/>
    <property type="match status" value="1"/>
</dbReference>
<dbReference type="InterPro" id="IPR047873">
    <property type="entry name" value="Ribosomal_uL16"/>
</dbReference>
<dbReference type="InterPro" id="IPR000114">
    <property type="entry name" value="Ribosomal_uL16_bact-type"/>
</dbReference>
<dbReference type="InterPro" id="IPR020798">
    <property type="entry name" value="Ribosomal_uL16_CS"/>
</dbReference>
<dbReference type="InterPro" id="IPR016180">
    <property type="entry name" value="Ribosomal_uL16_dom"/>
</dbReference>
<dbReference type="InterPro" id="IPR036920">
    <property type="entry name" value="Ribosomal_uL16_sf"/>
</dbReference>
<dbReference type="NCBIfam" id="TIGR01164">
    <property type="entry name" value="rplP_bact"/>
    <property type="match status" value="1"/>
</dbReference>
<dbReference type="PANTHER" id="PTHR12220">
    <property type="entry name" value="50S/60S RIBOSOMAL PROTEIN L16"/>
    <property type="match status" value="1"/>
</dbReference>
<dbReference type="PANTHER" id="PTHR12220:SF13">
    <property type="entry name" value="LARGE RIBOSOMAL SUBUNIT PROTEIN UL16M"/>
    <property type="match status" value="1"/>
</dbReference>
<dbReference type="Pfam" id="PF00252">
    <property type="entry name" value="Ribosomal_L16"/>
    <property type="match status" value="1"/>
</dbReference>
<dbReference type="PRINTS" id="PR00060">
    <property type="entry name" value="RIBOSOMALL16"/>
</dbReference>
<dbReference type="SUPFAM" id="SSF54686">
    <property type="entry name" value="Ribosomal protein L16p/L10e"/>
    <property type="match status" value="1"/>
</dbReference>
<dbReference type="PROSITE" id="PS00586">
    <property type="entry name" value="RIBOSOMAL_L16_1"/>
    <property type="match status" value="1"/>
</dbReference>
<dbReference type="PROSITE" id="PS00701">
    <property type="entry name" value="RIBOSOMAL_L16_2"/>
    <property type="match status" value="1"/>
</dbReference>
<feature type="chain" id="PRO_1000142925" description="Large ribosomal subunit protein uL16">
    <location>
        <begin position="1"/>
        <end position="144"/>
    </location>
</feature>
<proteinExistence type="inferred from homology"/>
<evidence type="ECO:0000255" key="1">
    <source>
        <dbReference type="HAMAP-Rule" id="MF_01342"/>
    </source>
</evidence>
<evidence type="ECO:0000305" key="2"/>